<dbReference type="EMBL" id="AF303741">
    <property type="protein sequence ID" value="AAK82110.1"/>
    <property type="molecule type" value="Genomic_DNA"/>
</dbReference>
<dbReference type="RefSeq" id="NP_149712.1">
    <property type="nucleotide sequence ID" value="NC_003038.1"/>
</dbReference>
<dbReference type="KEGG" id="vg:1733389"/>
<dbReference type="Proteomes" id="UP000001359">
    <property type="component" value="Genome"/>
</dbReference>
<protein>
    <recommendedName>
        <fullName>Uncharacterized protein 249R</fullName>
    </recommendedName>
</protein>
<sequence>MKELIFFLLIIVILFVVFMVVSSKQTKTFGRNEEPFLQIKNNLGWGGCGLTNWF</sequence>
<proteinExistence type="inferred from homology"/>
<name>249R_IIV6</name>
<evidence type="ECO:0000255" key="1"/>
<organismHost>
    <name type="scientific">Acheta domesticus</name>
    <name type="common">House cricket</name>
    <dbReference type="NCBI Taxonomy" id="6997"/>
</organismHost>
<organismHost>
    <name type="scientific">Chilo suppressalis</name>
    <name type="common">Asiatic rice borer moth</name>
    <dbReference type="NCBI Taxonomy" id="168631"/>
</organismHost>
<organismHost>
    <name type="scientific">Gryllus bimaculatus</name>
    <name type="common">Two-spotted cricket</name>
    <dbReference type="NCBI Taxonomy" id="6999"/>
</organismHost>
<organismHost>
    <name type="scientific">Gryllus campestris</name>
    <dbReference type="NCBI Taxonomy" id="58607"/>
</organismHost>
<organismHost>
    <name type="scientific">Spodoptera frugiperda</name>
    <name type="common">Fall armyworm</name>
    <dbReference type="NCBI Taxonomy" id="7108"/>
</organismHost>
<feature type="signal peptide" evidence="1">
    <location>
        <begin position="1"/>
        <end position="23"/>
    </location>
</feature>
<feature type="chain" id="PRO_0000377831" description="Uncharacterized protein 249R">
    <location>
        <begin position="24"/>
        <end position="54"/>
    </location>
</feature>
<organism>
    <name type="scientific">Invertebrate iridescent virus 6</name>
    <name type="common">IIV-6</name>
    <name type="synonym">Chilo iridescent virus</name>
    <dbReference type="NCBI Taxonomy" id="176652"/>
    <lineage>
        <taxon>Viruses</taxon>
        <taxon>Varidnaviria</taxon>
        <taxon>Bamfordvirae</taxon>
        <taxon>Nucleocytoviricota</taxon>
        <taxon>Megaviricetes</taxon>
        <taxon>Pimascovirales</taxon>
        <taxon>Iridoviridae</taxon>
        <taxon>Betairidovirinae</taxon>
        <taxon>Iridovirus</taxon>
    </lineage>
</organism>
<keyword id="KW-1185">Reference proteome</keyword>
<keyword id="KW-0732">Signal</keyword>
<accession>Q91FS3</accession>
<gene>
    <name type="ORF">IIV6-249R</name>
</gene>
<reference key="1">
    <citation type="journal article" date="2001" name="Virology">
        <title>Analysis of the first complete DNA sequence of an invertebrate iridovirus: coding strategy of the genome of Chilo iridescent virus.</title>
        <authorList>
            <person name="Jakob N.J."/>
            <person name="Mueller K."/>
            <person name="Bahr U."/>
            <person name="Darai G."/>
        </authorList>
    </citation>
    <scope>NUCLEOTIDE SEQUENCE [LARGE SCALE GENOMIC DNA]</scope>
</reference>
<reference key="2">
    <citation type="journal article" date="2007" name="Virol. J.">
        <title>Comparative genomic analysis of the family Iridoviridae: re-annotating and defining the core set of iridovirus genes.</title>
        <authorList>
            <person name="Eaton H.E."/>
            <person name="Metcalf J."/>
            <person name="Penny E."/>
            <person name="Tcherepanov V."/>
            <person name="Upton C."/>
            <person name="Brunetti C.R."/>
        </authorList>
    </citation>
    <scope>GENOME REANNOTATION</scope>
</reference>